<name>MIAA_STRM5</name>
<keyword id="KW-0067">ATP-binding</keyword>
<keyword id="KW-0460">Magnesium</keyword>
<keyword id="KW-0547">Nucleotide-binding</keyword>
<keyword id="KW-0808">Transferase</keyword>
<keyword id="KW-0819">tRNA processing</keyword>
<gene>
    <name evidence="1" type="primary">miaA</name>
    <name type="ordered locus">Smal_1470</name>
</gene>
<evidence type="ECO:0000255" key="1">
    <source>
        <dbReference type="HAMAP-Rule" id="MF_00185"/>
    </source>
</evidence>
<proteinExistence type="inferred from homology"/>
<dbReference type="EC" id="2.5.1.75" evidence="1"/>
<dbReference type="EMBL" id="CP001111">
    <property type="protein sequence ID" value="ACF51175.1"/>
    <property type="molecule type" value="Genomic_DNA"/>
</dbReference>
<dbReference type="RefSeq" id="WP_012510661.1">
    <property type="nucleotide sequence ID" value="NC_011071.1"/>
</dbReference>
<dbReference type="SMR" id="B4SRA4"/>
<dbReference type="STRING" id="391008.Smal_1470"/>
<dbReference type="KEGG" id="smt:Smal_1470"/>
<dbReference type="eggNOG" id="COG0324">
    <property type="taxonomic scope" value="Bacteria"/>
</dbReference>
<dbReference type="HOGENOM" id="CLU_032616_0_0_6"/>
<dbReference type="OrthoDB" id="9776390at2"/>
<dbReference type="Proteomes" id="UP000001867">
    <property type="component" value="Chromosome"/>
</dbReference>
<dbReference type="GO" id="GO:0005524">
    <property type="term" value="F:ATP binding"/>
    <property type="evidence" value="ECO:0007669"/>
    <property type="project" value="UniProtKB-UniRule"/>
</dbReference>
<dbReference type="GO" id="GO:0052381">
    <property type="term" value="F:tRNA dimethylallyltransferase activity"/>
    <property type="evidence" value="ECO:0007669"/>
    <property type="project" value="UniProtKB-UniRule"/>
</dbReference>
<dbReference type="GO" id="GO:0006400">
    <property type="term" value="P:tRNA modification"/>
    <property type="evidence" value="ECO:0007669"/>
    <property type="project" value="TreeGrafter"/>
</dbReference>
<dbReference type="FunFam" id="1.10.20.140:FF:000001">
    <property type="entry name" value="tRNA dimethylallyltransferase"/>
    <property type="match status" value="1"/>
</dbReference>
<dbReference type="Gene3D" id="1.10.20.140">
    <property type="match status" value="1"/>
</dbReference>
<dbReference type="Gene3D" id="3.40.50.300">
    <property type="entry name" value="P-loop containing nucleotide triphosphate hydrolases"/>
    <property type="match status" value="1"/>
</dbReference>
<dbReference type="HAMAP" id="MF_00185">
    <property type="entry name" value="IPP_trans"/>
    <property type="match status" value="1"/>
</dbReference>
<dbReference type="InterPro" id="IPR039657">
    <property type="entry name" value="Dimethylallyltransferase"/>
</dbReference>
<dbReference type="InterPro" id="IPR018022">
    <property type="entry name" value="IPT"/>
</dbReference>
<dbReference type="InterPro" id="IPR027417">
    <property type="entry name" value="P-loop_NTPase"/>
</dbReference>
<dbReference type="NCBIfam" id="TIGR00174">
    <property type="entry name" value="miaA"/>
    <property type="match status" value="1"/>
</dbReference>
<dbReference type="PANTHER" id="PTHR11088">
    <property type="entry name" value="TRNA DIMETHYLALLYLTRANSFERASE"/>
    <property type="match status" value="1"/>
</dbReference>
<dbReference type="PANTHER" id="PTHR11088:SF60">
    <property type="entry name" value="TRNA DIMETHYLALLYLTRANSFERASE"/>
    <property type="match status" value="1"/>
</dbReference>
<dbReference type="Pfam" id="PF01715">
    <property type="entry name" value="IPPT"/>
    <property type="match status" value="1"/>
</dbReference>
<dbReference type="SUPFAM" id="SSF52540">
    <property type="entry name" value="P-loop containing nucleoside triphosphate hydrolases"/>
    <property type="match status" value="2"/>
</dbReference>
<accession>B4SRA4</accession>
<sequence length="317" mass="34658">MGIDQRPLAIAVMGPTASGKTATAIALARQLDGEIVSVDSALVYRHLDIGSAKPDAAERAQAPHHLLDLRDPWQTYSAAEFAADASRVVVDIVARGKMPILAGGTGLYFRALLQGLSPMPEADPAMRAALAAEAAERGWAALHAELAQIDPAAATRIHATDPQRIQRALEVYRLTGTPITEWQRRPGVAPLPVRTLKLILAPHDRAVLHQRIEARFDAMLAQGFLDEVRALRAMPEMAAVEAPLDLPAVRAVGYRQAWEYLDGEGDAARFRDKAIFATRQLAKRQLTWLRGELDARWFDPHIDQERLAGAVSTFVAR</sequence>
<feature type="chain" id="PRO_1000098690" description="tRNA dimethylallyltransferase">
    <location>
        <begin position="1"/>
        <end position="317"/>
    </location>
</feature>
<feature type="region of interest" description="Interaction with substrate tRNA" evidence="1">
    <location>
        <begin position="39"/>
        <end position="42"/>
    </location>
</feature>
<feature type="region of interest" description="Interaction with substrate tRNA" evidence="1">
    <location>
        <begin position="163"/>
        <end position="167"/>
    </location>
</feature>
<feature type="binding site" evidence="1">
    <location>
        <begin position="14"/>
        <end position="21"/>
    </location>
    <ligand>
        <name>ATP</name>
        <dbReference type="ChEBI" id="CHEBI:30616"/>
    </ligand>
</feature>
<feature type="binding site" evidence="1">
    <location>
        <begin position="16"/>
        <end position="21"/>
    </location>
    <ligand>
        <name>substrate</name>
    </ligand>
</feature>
<feature type="site" description="Interaction with substrate tRNA" evidence="1">
    <location>
        <position position="105"/>
    </location>
</feature>
<feature type="site" description="Interaction with substrate tRNA" evidence="1">
    <location>
        <position position="127"/>
    </location>
</feature>
<organism>
    <name type="scientific">Stenotrophomonas maltophilia (strain R551-3)</name>
    <dbReference type="NCBI Taxonomy" id="391008"/>
    <lineage>
        <taxon>Bacteria</taxon>
        <taxon>Pseudomonadati</taxon>
        <taxon>Pseudomonadota</taxon>
        <taxon>Gammaproteobacteria</taxon>
        <taxon>Lysobacterales</taxon>
        <taxon>Lysobacteraceae</taxon>
        <taxon>Stenotrophomonas</taxon>
        <taxon>Stenotrophomonas maltophilia group</taxon>
    </lineage>
</organism>
<protein>
    <recommendedName>
        <fullName evidence="1">tRNA dimethylallyltransferase</fullName>
        <ecNumber evidence="1">2.5.1.75</ecNumber>
    </recommendedName>
    <alternativeName>
        <fullName evidence="1">Dimethylallyl diphosphate:tRNA dimethylallyltransferase</fullName>
        <shortName evidence="1">DMAPP:tRNA dimethylallyltransferase</shortName>
        <shortName evidence="1">DMATase</shortName>
    </alternativeName>
    <alternativeName>
        <fullName evidence="1">Isopentenyl-diphosphate:tRNA isopentenyltransferase</fullName>
        <shortName evidence="1">IPP transferase</shortName>
        <shortName evidence="1">IPPT</shortName>
        <shortName evidence="1">IPTase</shortName>
    </alternativeName>
</protein>
<reference key="1">
    <citation type="submission" date="2008-06" db="EMBL/GenBank/DDBJ databases">
        <title>Complete sequence of Stenotrophomonas maltophilia R551-3.</title>
        <authorList>
            <consortium name="US DOE Joint Genome Institute"/>
            <person name="Lucas S."/>
            <person name="Copeland A."/>
            <person name="Lapidus A."/>
            <person name="Glavina del Rio T."/>
            <person name="Dalin E."/>
            <person name="Tice H."/>
            <person name="Pitluck S."/>
            <person name="Chain P."/>
            <person name="Malfatti S."/>
            <person name="Shin M."/>
            <person name="Vergez L."/>
            <person name="Lang D."/>
            <person name="Schmutz J."/>
            <person name="Larimer F."/>
            <person name="Land M."/>
            <person name="Hauser L."/>
            <person name="Kyrpides N."/>
            <person name="Mikhailova N."/>
            <person name="Taghavi S."/>
            <person name="Monchy S."/>
            <person name="Newman L."/>
            <person name="Vangronsveld J."/>
            <person name="van der Lelie D."/>
            <person name="Richardson P."/>
        </authorList>
    </citation>
    <scope>NUCLEOTIDE SEQUENCE [LARGE SCALE GENOMIC DNA]</scope>
    <source>
        <strain>R551-3</strain>
    </source>
</reference>
<comment type="function">
    <text evidence="1">Catalyzes the transfer of a dimethylallyl group onto the adenine at position 37 in tRNAs that read codons beginning with uridine, leading to the formation of N6-(dimethylallyl)adenosine (i(6)A).</text>
</comment>
<comment type="catalytic activity">
    <reaction evidence="1">
        <text>adenosine(37) in tRNA + dimethylallyl diphosphate = N(6)-dimethylallyladenosine(37) in tRNA + diphosphate</text>
        <dbReference type="Rhea" id="RHEA:26482"/>
        <dbReference type="Rhea" id="RHEA-COMP:10162"/>
        <dbReference type="Rhea" id="RHEA-COMP:10375"/>
        <dbReference type="ChEBI" id="CHEBI:33019"/>
        <dbReference type="ChEBI" id="CHEBI:57623"/>
        <dbReference type="ChEBI" id="CHEBI:74411"/>
        <dbReference type="ChEBI" id="CHEBI:74415"/>
        <dbReference type="EC" id="2.5.1.75"/>
    </reaction>
</comment>
<comment type="cofactor">
    <cofactor evidence="1">
        <name>Mg(2+)</name>
        <dbReference type="ChEBI" id="CHEBI:18420"/>
    </cofactor>
</comment>
<comment type="subunit">
    <text evidence="1">Monomer.</text>
</comment>
<comment type="similarity">
    <text evidence="1">Belongs to the IPP transferase family.</text>
</comment>